<proteinExistence type="inferred from homology"/>
<accession>Q6CT29</accession>
<sequence length="467" mass="51126">MSIQTQDSQETLKSLSLIAAHSHISGLGLDENLQPKPSSQGMVGQLQARRAAGVILKMVQNGSIAGRAVLVAGPPSTGKTALAMGLSQSLGKDVPFTAIAGSEIFSLELSKTEALTQAFRKSIGIKIKEETELIEGEVVEIQIDRSITGGHKQGKLTIKTTDMETIYELGNKMIEGLTKEKVLAGDVISIDKASGKITKLGRSFARSRDYDAMGADTKFVQCPEGELQKRKTVVHTVSLHEIDVINSRTQGFLALFTGDTGEIRSEVRDQINTKVAEWKEEGKAEIVPGVLFIDEVHMLDIECFSFINRALEDEFAPIVIMATNRGISKTRGTNYKSPHGLPLDLLDRSIIITTKNYDASEIKTILTIRSTEEEVELSPEALDLLTNIGSETSLRYSSNLISVSQQIAQKRKSNTVEVKDVERAYLLFLDSARSVKFVQEFESQYIDDKGQVNISIGKDEDAMDTTA</sequence>
<evidence type="ECO:0000250" key="1"/>
<evidence type="ECO:0000305" key="2"/>
<protein>
    <recommendedName>
        <fullName>RuvB-like helicase 2</fullName>
        <ecNumber>3.6.4.12</ecNumber>
    </recommendedName>
</protein>
<name>RUVB2_KLULA</name>
<feature type="chain" id="PRO_0000165670" description="RuvB-like helicase 2">
    <location>
        <begin position="1"/>
        <end position="467"/>
    </location>
</feature>
<feature type="binding site" evidence="1">
    <location>
        <begin position="73"/>
        <end position="80"/>
    </location>
    <ligand>
        <name>ATP</name>
        <dbReference type="ChEBI" id="CHEBI:30616"/>
    </ligand>
</feature>
<comment type="function">
    <text evidence="1">DNA helicase which participates in several chromatin remodeling complexes, including the SWR1 and the INO80 complexes. The SWR1 complex mediates the ATP-dependent exchange of histone H2A for the H2A variant HZT1 leading to transcriptional regulation of selected genes by chromatin remodeling. The INO80 complex remodels chromatin by shifting nucleosomes and is involved in DNA repair. Also involved in pre-rRNA processing (By similarity).</text>
</comment>
<comment type="catalytic activity">
    <reaction>
        <text>ATP + H2O = ADP + phosphate + H(+)</text>
        <dbReference type="Rhea" id="RHEA:13065"/>
        <dbReference type="ChEBI" id="CHEBI:15377"/>
        <dbReference type="ChEBI" id="CHEBI:15378"/>
        <dbReference type="ChEBI" id="CHEBI:30616"/>
        <dbReference type="ChEBI" id="CHEBI:43474"/>
        <dbReference type="ChEBI" id="CHEBI:456216"/>
        <dbReference type="EC" id="3.6.4.12"/>
    </reaction>
</comment>
<comment type="subunit">
    <text evidence="1">May form heterododecamers with RVB1. Component of the SWR1 chromatin remodeling complex, the INO80 chromatin remodeling complex, and of the R2TP complex (By similarity).</text>
</comment>
<comment type="subcellular location">
    <subcellularLocation>
        <location evidence="1">Nucleus</location>
    </subcellularLocation>
</comment>
<comment type="similarity">
    <text evidence="2">Belongs to the RuvB family.</text>
</comment>
<dbReference type="EC" id="3.6.4.12"/>
<dbReference type="EMBL" id="CR382123">
    <property type="protein sequence ID" value="CAH01761.1"/>
    <property type="molecule type" value="Genomic_DNA"/>
</dbReference>
<dbReference type="RefSeq" id="XP_452910.1">
    <property type="nucleotide sequence ID" value="XM_452910.1"/>
</dbReference>
<dbReference type="SMR" id="Q6CT29"/>
<dbReference type="FunCoup" id="Q6CT29">
    <property type="interactions" value="1718"/>
</dbReference>
<dbReference type="STRING" id="284590.Q6CT29"/>
<dbReference type="PaxDb" id="284590-Q6CT29"/>
<dbReference type="KEGG" id="kla:KLLA0_C15895g"/>
<dbReference type="eggNOG" id="KOG2680">
    <property type="taxonomic scope" value="Eukaryota"/>
</dbReference>
<dbReference type="HOGENOM" id="CLU_028311_4_0_1"/>
<dbReference type="InParanoid" id="Q6CT29"/>
<dbReference type="OMA" id="IINTEPY"/>
<dbReference type="Proteomes" id="UP000000598">
    <property type="component" value="Chromosome C"/>
</dbReference>
<dbReference type="GO" id="GO:0005634">
    <property type="term" value="C:nucleus"/>
    <property type="evidence" value="ECO:0007669"/>
    <property type="project" value="UniProtKB-SubCell"/>
</dbReference>
<dbReference type="GO" id="GO:0005524">
    <property type="term" value="F:ATP binding"/>
    <property type="evidence" value="ECO:0007669"/>
    <property type="project" value="UniProtKB-KW"/>
</dbReference>
<dbReference type="GO" id="GO:0016887">
    <property type="term" value="F:ATP hydrolysis activity"/>
    <property type="evidence" value="ECO:0007669"/>
    <property type="project" value="InterPro"/>
</dbReference>
<dbReference type="GO" id="GO:0008094">
    <property type="term" value="F:ATP-dependent activity, acting on DNA"/>
    <property type="evidence" value="ECO:0007669"/>
    <property type="project" value="InterPro"/>
</dbReference>
<dbReference type="GO" id="GO:0004386">
    <property type="term" value="F:helicase activity"/>
    <property type="evidence" value="ECO:0007669"/>
    <property type="project" value="UniProtKB-KW"/>
</dbReference>
<dbReference type="GO" id="GO:0006325">
    <property type="term" value="P:chromatin organization"/>
    <property type="evidence" value="ECO:0007669"/>
    <property type="project" value="UniProtKB-KW"/>
</dbReference>
<dbReference type="GO" id="GO:0006281">
    <property type="term" value="P:DNA repair"/>
    <property type="evidence" value="ECO:0007669"/>
    <property type="project" value="UniProtKB-KW"/>
</dbReference>
<dbReference type="GO" id="GO:0006364">
    <property type="term" value="P:rRNA processing"/>
    <property type="evidence" value="ECO:0007669"/>
    <property type="project" value="UniProtKB-KW"/>
</dbReference>
<dbReference type="FunFam" id="3.40.50.300:FF:002221">
    <property type="entry name" value="RuvB-like 2"/>
    <property type="match status" value="2"/>
</dbReference>
<dbReference type="FunFam" id="1.10.8.60:FF:000010">
    <property type="entry name" value="RuvB-like helicase"/>
    <property type="match status" value="1"/>
</dbReference>
<dbReference type="FunFam" id="2.40.50.360:FF:000002">
    <property type="entry name" value="RuvB-like helicase"/>
    <property type="match status" value="1"/>
</dbReference>
<dbReference type="Gene3D" id="1.10.8.60">
    <property type="match status" value="1"/>
</dbReference>
<dbReference type="Gene3D" id="3.40.50.300">
    <property type="entry name" value="P-loop containing nucleotide triphosphate hydrolases"/>
    <property type="match status" value="1"/>
</dbReference>
<dbReference type="Gene3D" id="2.40.50.360">
    <property type="entry name" value="RuvB-like helicase, domain II"/>
    <property type="match status" value="1"/>
</dbReference>
<dbReference type="InterPro" id="IPR003593">
    <property type="entry name" value="AAA+_ATPase"/>
</dbReference>
<dbReference type="InterPro" id="IPR027417">
    <property type="entry name" value="P-loop_NTPase"/>
</dbReference>
<dbReference type="InterPro" id="IPR027238">
    <property type="entry name" value="RuvB-like"/>
</dbReference>
<dbReference type="InterPro" id="IPR041048">
    <property type="entry name" value="RuvB-like_C"/>
</dbReference>
<dbReference type="InterPro" id="IPR042487">
    <property type="entry name" value="RuvBL1/2_DNA/RNA_bd_dom"/>
</dbReference>
<dbReference type="InterPro" id="IPR010339">
    <property type="entry name" value="TIP49_P-loop"/>
</dbReference>
<dbReference type="PANTHER" id="PTHR11093">
    <property type="entry name" value="RUVB-RELATED REPTIN AND PONTIN"/>
    <property type="match status" value="1"/>
</dbReference>
<dbReference type="Pfam" id="PF06068">
    <property type="entry name" value="TIP49"/>
    <property type="match status" value="1"/>
</dbReference>
<dbReference type="Pfam" id="PF17856">
    <property type="entry name" value="TIP49_C"/>
    <property type="match status" value="1"/>
</dbReference>
<dbReference type="SMART" id="SM00382">
    <property type="entry name" value="AAA"/>
    <property type="match status" value="1"/>
</dbReference>
<dbReference type="SUPFAM" id="SSF52540">
    <property type="entry name" value="P-loop containing nucleoside triphosphate hydrolases"/>
    <property type="match status" value="1"/>
</dbReference>
<gene>
    <name type="primary">RVB2</name>
    <name type="ordered locus">KLLA0C15895g</name>
</gene>
<reference key="1">
    <citation type="journal article" date="2004" name="Nature">
        <title>Genome evolution in yeasts.</title>
        <authorList>
            <person name="Dujon B."/>
            <person name="Sherman D."/>
            <person name="Fischer G."/>
            <person name="Durrens P."/>
            <person name="Casaregola S."/>
            <person name="Lafontaine I."/>
            <person name="de Montigny J."/>
            <person name="Marck C."/>
            <person name="Neuveglise C."/>
            <person name="Talla E."/>
            <person name="Goffard N."/>
            <person name="Frangeul L."/>
            <person name="Aigle M."/>
            <person name="Anthouard V."/>
            <person name="Babour A."/>
            <person name="Barbe V."/>
            <person name="Barnay S."/>
            <person name="Blanchin S."/>
            <person name="Beckerich J.-M."/>
            <person name="Beyne E."/>
            <person name="Bleykasten C."/>
            <person name="Boisrame A."/>
            <person name="Boyer J."/>
            <person name="Cattolico L."/>
            <person name="Confanioleri F."/>
            <person name="de Daruvar A."/>
            <person name="Despons L."/>
            <person name="Fabre E."/>
            <person name="Fairhead C."/>
            <person name="Ferry-Dumazet H."/>
            <person name="Groppi A."/>
            <person name="Hantraye F."/>
            <person name="Hennequin C."/>
            <person name="Jauniaux N."/>
            <person name="Joyet P."/>
            <person name="Kachouri R."/>
            <person name="Kerrest A."/>
            <person name="Koszul R."/>
            <person name="Lemaire M."/>
            <person name="Lesur I."/>
            <person name="Ma L."/>
            <person name="Muller H."/>
            <person name="Nicaud J.-M."/>
            <person name="Nikolski M."/>
            <person name="Oztas S."/>
            <person name="Ozier-Kalogeropoulos O."/>
            <person name="Pellenz S."/>
            <person name="Potier S."/>
            <person name="Richard G.-F."/>
            <person name="Straub M.-L."/>
            <person name="Suleau A."/>
            <person name="Swennen D."/>
            <person name="Tekaia F."/>
            <person name="Wesolowski-Louvel M."/>
            <person name="Westhof E."/>
            <person name="Wirth B."/>
            <person name="Zeniou-Meyer M."/>
            <person name="Zivanovic Y."/>
            <person name="Bolotin-Fukuhara M."/>
            <person name="Thierry A."/>
            <person name="Bouchier C."/>
            <person name="Caudron B."/>
            <person name="Scarpelli C."/>
            <person name="Gaillardin C."/>
            <person name="Weissenbach J."/>
            <person name="Wincker P."/>
            <person name="Souciet J.-L."/>
        </authorList>
    </citation>
    <scope>NUCLEOTIDE SEQUENCE [LARGE SCALE GENOMIC DNA]</scope>
    <source>
        <strain>ATCC 8585 / CBS 2359 / DSM 70799 / NBRC 1267 / NRRL Y-1140 / WM37</strain>
    </source>
</reference>
<organism>
    <name type="scientific">Kluyveromyces lactis (strain ATCC 8585 / CBS 2359 / DSM 70799 / NBRC 1267 / NRRL Y-1140 / WM37)</name>
    <name type="common">Yeast</name>
    <name type="synonym">Candida sphaerica</name>
    <dbReference type="NCBI Taxonomy" id="284590"/>
    <lineage>
        <taxon>Eukaryota</taxon>
        <taxon>Fungi</taxon>
        <taxon>Dikarya</taxon>
        <taxon>Ascomycota</taxon>
        <taxon>Saccharomycotina</taxon>
        <taxon>Saccharomycetes</taxon>
        <taxon>Saccharomycetales</taxon>
        <taxon>Saccharomycetaceae</taxon>
        <taxon>Kluyveromyces</taxon>
    </lineage>
</organism>
<keyword id="KW-0010">Activator</keyword>
<keyword id="KW-0067">ATP-binding</keyword>
<keyword id="KW-0156">Chromatin regulator</keyword>
<keyword id="KW-0227">DNA damage</keyword>
<keyword id="KW-0234">DNA repair</keyword>
<keyword id="KW-0347">Helicase</keyword>
<keyword id="KW-0378">Hydrolase</keyword>
<keyword id="KW-0547">Nucleotide-binding</keyword>
<keyword id="KW-0539">Nucleus</keyword>
<keyword id="KW-1185">Reference proteome</keyword>
<keyword id="KW-0698">rRNA processing</keyword>
<keyword id="KW-0804">Transcription</keyword>
<keyword id="KW-0805">Transcription regulation</keyword>